<sequence length="67" mass="7477">MARITVEDCLNQIPNRFKLTLAATYRARELVQGHAPRLDSKDKPTVTALREIASGLTGLEMLRKVPT</sequence>
<organism>
    <name type="scientific">Bordetella pertussis (strain Tohama I / ATCC BAA-589 / NCTC 13251)</name>
    <dbReference type="NCBI Taxonomy" id="257313"/>
    <lineage>
        <taxon>Bacteria</taxon>
        <taxon>Pseudomonadati</taxon>
        <taxon>Pseudomonadota</taxon>
        <taxon>Betaproteobacteria</taxon>
        <taxon>Burkholderiales</taxon>
        <taxon>Alcaligenaceae</taxon>
        <taxon>Bordetella</taxon>
    </lineage>
</organism>
<feature type="chain" id="PRO_0000128920" description="DNA-directed RNA polymerase subunit omega">
    <location>
        <begin position="1"/>
        <end position="67"/>
    </location>
</feature>
<name>RPOZ_BORPE</name>
<proteinExistence type="inferred from homology"/>
<comment type="function">
    <text evidence="1">Promotes RNA polymerase assembly. Latches the N- and C-terminal regions of the beta' subunit thereby facilitating its interaction with the beta and alpha subunits.</text>
</comment>
<comment type="catalytic activity">
    <reaction evidence="1">
        <text>RNA(n) + a ribonucleoside 5'-triphosphate = RNA(n+1) + diphosphate</text>
        <dbReference type="Rhea" id="RHEA:21248"/>
        <dbReference type="Rhea" id="RHEA-COMP:14527"/>
        <dbReference type="Rhea" id="RHEA-COMP:17342"/>
        <dbReference type="ChEBI" id="CHEBI:33019"/>
        <dbReference type="ChEBI" id="CHEBI:61557"/>
        <dbReference type="ChEBI" id="CHEBI:140395"/>
        <dbReference type="EC" id="2.7.7.6"/>
    </reaction>
</comment>
<comment type="subunit">
    <text evidence="1">The RNAP catalytic core consists of 2 alpha, 1 beta, 1 beta' and 1 omega subunit. When a sigma factor is associated with the core the holoenzyme is formed, which can initiate transcription.</text>
</comment>
<comment type="similarity">
    <text evidence="1">Belongs to the RNA polymerase subunit omega family.</text>
</comment>
<dbReference type="EC" id="2.7.7.6" evidence="1"/>
<dbReference type="EMBL" id="BX640415">
    <property type="protein sequence ID" value="CAE41866.1"/>
    <property type="molecule type" value="Genomic_DNA"/>
</dbReference>
<dbReference type="RefSeq" id="NP_880310.1">
    <property type="nucleotide sequence ID" value="NC_002929.2"/>
</dbReference>
<dbReference type="RefSeq" id="WP_010930441.1">
    <property type="nucleotide sequence ID" value="NZ_CP039022.1"/>
</dbReference>
<dbReference type="SMR" id="Q7VXZ4"/>
<dbReference type="STRING" id="257313.BP1577"/>
<dbReference type="PaxDb" id="257313-BP1577"/>
<dbReference type="GeneID" id="69601496"/>
<dbReference type="KEGG" id="bpe:BP1577"/>
<dbReference type="PATRIC" id="fig|257313.5.peg.1693"/>
<dbReference type="eggNOG" id="COG1758">
    <property type="taxonomic scope" value="Bacteria"/>
</dbReference>
<dbReference type="HOGENOM" id="CLU_125406_5_1_4"/>
<dbReference type="Proteomes" id="UP000002676">
    <property type="component" value="Chromosome"/>
</dbReference>
<dbReference type="GO" id="GO:0000428">
    <property type="term" value="C:DNA-directed RNA polymerase complex"/>
    <property type="evidence" value="ECO:0007669"/>
    <property type="project" value="UniProtKB-KW"/>
</dbReference>
<dbReference type="GO" id="GO:0003677">
    <property type="term" value="F:DNA binding"/>
    <property type="evidence" value="ECO:0007669"/>
    <property type="project" value="UniProtKB-UniRule"/>
</dbReference>
<dbReference type="GO" id="GO:0003899">
    <property type="term" value="F:DNA-directed RNA polymerase activity"/>
    <property type="evidence" value="ECO:0007669"/>
    <property type="project" value="UniProtKB-UniRule"/>
</dbReference>
<dbReference type="GO" id="GO:0006351">
    <property type="term" value="P:DNA-templated transcription"/>
    <property type="evidence" value="ECO:0007669"/>
    <property type="project" value="UniProtKB-UniRule"/>
</dbReference>
<dbReference type="Gene3D" id="3.90.940.10">
    <property type="match status" value="1"/>
</dbReference>
<dbReference type="HAMAP" id="MF_00366">
    <property type="entry name" value="RNApol_bact_RpoZ"/>
    <property type="match status" value="1"/>
</dbReference>
<dbReference type="InterPro" id="IPR003716">
    <property type="entry name" value="DNA-dir_RNA_pol_omega"/>
</dbReference>
<dbReference type="InterPro" id="IPR006110">
    <property type="entry name" value="Pol_omega/Rpo6/RPB6"/>
</dbReference>
<dbReference type="InterPro" id="IPR036161">
    <property type="entry name" value="RPB6/omega-like_sf"/>
</dbReference>
<dbReference type="NCBIfam" id="TIGR00690">
    <property type="entry name" value="rpoZ"/>
    <property type="match status" value="1"/>
</dbReference>
<dbReference type="PANTHER" id="PTHR34476">
    <property type="entry name" value="DNA-DIRECTED RNA POLYMERASE SUBUNIT OMEGA"/>
    <property type="match status" value="1"/>
</dbReference>
<dbReference type="PANTHER" id="PTHR34476:SF1">
    <property type="entry name" value="DNA-DIRECTED RNA POLYMERASE SUBUNIT OMEGA"/>
    <property type="match status" value="1"/>
</dbReference>
<dbReference type="Pfam" id="PF01192">
    <property type="entry name" value="RNA_pol_Rpb6"/>
    <property type="match status" value="1"/>
</dbReference>
<dbReference type="SMART" id="SM01409">
    <property type="entry name" value="RNA_pol_Rpb6"/>
    <property type="match status" value="1"/>
</dbReference>
<dbReference type="SUPFAM" id="SSF63562">
    <property type="entry name" value="RPB6/omega subunit-like"/>
    <property type="match status" value="1"/>
</dbReference>
<reference key="1">
    <citation type="journal article" date="2003" name="Nat. Genet.">
        <title>Comparative analysis of the genome sequences of Bordetella pertussis, Bordetella parapertussis and Bordetella bronchiseptica.</title>
        <authorList>
            <person name="Parkhill J."/>
            <person name="Sebaihia M."/>
            <person name="Preston A."/>
            <person name="Murphy L.D."/>
            <person name="Thomson N.R."/>
            <person name="Harris D.E."/>
            <person name="Holden M.T.G."/>
            <person name="Churcher C.M."/>
            <person name="Bentley S.D."/>
            <person name="Mungall K.L."/>
            <person name="Cerdeno-Tarraga A.-M."/>
            <person name="Temple L."/>
            <person name="James K.D."/>
            <person name="Harris B."/>
            <person name="Quail M.A."/>
            <person name="Achtman M."/>
            <person name="Atkin R."/>
            <person name="Baker S."/>
            <person name="Basham D."/>
            <person name="Bason N."/>
            <person name="Cherevach I."/>
            <person name="Chillingworth T."/>
            <person name="Collins M."/>
            <person name="Cronin A."/>
            <person name="Davis P."/>
            <person name="Doggett J."/>
            <person name="Feltwell T."/>
            <person name="Goble A."/>
            <person name="Hamlin N."/>
            <person name="Hauser H."/>
            <person name="Holroyd S."/>
            <person name="Jagels K."/>
            <person name="Leather S."/>
            <person name="Moule S."/>
            <person name="Norberczak H."/>
            <person name="O'Neil S."/>
            <person name="Ormond D."/>
            <person name="Price C."/>
            <person name="Rabbinowitsch E."/>
            <person name="Rutter S."/>
            <person name="Sanders M."/>
            <person name="Saunders D."/>
            <person name="Seeger K."/>
            <person name="Sharp S."/>
            <person name="Simmonds M."/>
            <person name="Skelton J."/>
            <person name="Squares R."/>
            <person name="Squares S."/>
            <person name="Stevens K."/>
            <person name="Unwin L."/>
            <person name="Whitehead S."/>
            <person name="Barrell B.G."/>
            <person name="Maskell D.J."/>
        </authorList>
    </citation>
    <scope>NUCLEOTIDE SEQUENCE [LARGE SCALE GENOMIC DNA]</scope>
    <source>
        <strain>Tohama I / ATCC BAA-589 / NCTC 13251</strain>
    </source>
</reference>
<evidence type="ECO:0000255" key="1">
    <source>
        <dbReference type="HAMAP-Rule" id="MF_00366"/>
    </source>
</evidence>
<keyword id="KW-0240">DNA-directed RNA polymerase</keyword>
<keyword id="KW-0548">Nucleotidyltransferase</keyword>
<keyword id="KW-1185">Reference proteome</keyword>
<keyword id="KW-0804">Transcription</keyword>
<keyword id="KW-0808">Transferase</keyword>
<protein>
    <recommendedName>
        <fullName evidence="1">DNA-directed RNA polymerase subunit omega</fullName>
        <shortName evidence="1">RNAP omega subunit</shortName>
        <ecNumber evidence="1">2.7.7.6</ecNumber>
    </recommendedName>
    <alternativeName>
        <fullName evidence="1">RNA polymerase omega subunit</fullName>
    </alternativeName>
    <alternativeName>
        <fullName evidence="1">Transcriptase subunit omega</fullName>
    </alternativeName>
</protein>
<gene>
    <name evidence="1" type="primary">rpoZ</name>
    <name type="ordered locus">BP1577</name>
</gene>
<accession>Q7VXZ4</accession>